<proteinExistence type="inferred from homology"/>
<gene>
    <name evidence="1" type="primary">miaB2</name>
    <name type="ordered locus">MMAR_1979</name>
</gene>
<keyword id="KW-0004">4Fe-4S</keyword>
<keyword id="KW-0963">Cytoplasm</keyword>
<keyword id="KW-0408">Iron</keyword>
<keyword id="KW-0411">Iron-sulfur</keyword>
<keyword id="KW-0479">Metal-binding</keyword>
<keyword id="KW-1185">Reference proteome</keyword>
<keyword id="KW-0949">S-adenosyl-L-methionine</keyword>
<keyword id="KW-0808">Transferase</keyword>
<keyword id="KW-0819">tRNA processing</keyword>
<feature type="chain" id="PRO_0000374388" description="tRNA-2-methylthio-N(6)-dimethylallyladenosine synthase 2">
    <location>
        <begin position="1"/>
        <end position="532"/>
    </location>
</feature>
<feature type="domain" description="MTTase N-terminal" evidence="1">
    <location>
        <begin position="24"/>
        <end position="140"/>
    </location>
</feature>
<feature type="domain" description="Radical SAM core" evidence="2">
    <location>
        <begin position="163"/>
        <end position="399"/>
    </location>
</feature>
<feature type="domain" description="TRAM" evidence="1">
    <location>
        <begin position="402"/>
        <end position="470"/>
    </location>
</feature>
<feature type="region of interest" description="Disordered" evidence="3">
    <location>
        <begin position="1"/>
        <end position="21"/>
    </location>
</feature>
<feature type="region of interest" description="Disordered" evidence="3">
    <location>
        <begin position="510"/>
        <end position="532"/>
    </location>
</feature>
<feature type="compositionally biased region" description="Low complexity" evidence="3">
    <location>
        <begin position="523"/>
        <end position="532"/>
    </location>
</feature>
<feature type="binding site" evidence="1">
    <location>
        <position position="33"/>
    </location>
    <ligand>
        <name>[4Fe-4S] cluster</name>
        <dbReference type="ChEBI" id="CHEBI:49883"/>
        <label>1</label>
    </ligand>
</feature>
<feature type="binding site" evidence="1">
    <location>
        <position position="69"/>
    </location>
    <ligand>
        <name>[4Fe-4S] cluster</name>
        <dbReference type="ChEBI" id="CHEBI:49883"/>
        <label>1</label>
    </ligand>
</feature>
<feature type="binding site" evidence="1">
    <location>
        <position position="103"/>
    </location>
    <ligand>
        <name>[4Fe-4S] cluster</name>
        <dbReference type="ChEBI" id="CHEBI:49883"/>
        <label>1</label>
    </ligand>
</feature>
<feature type="binding site" evidence="1">
    <location>
        <position position="177"/>
    </location>
    <ligand>
        <name>[4Fe-4S] cluster</name>
        <dbReference type="ChEBI" id="CHEBI:49883"/>
        <label>2</label>
        <note>4Fe-4S-S-AdoMet</note>
    </ligand>
</feature>
<feature type="binding site" evidence="1">
    <location>
        <position position="181"/>
    </location>
    <ligand>
        <name>[4Fe-4S] cluster</name>
        <dbReference type="ChEBI" id="CHEBI:49883"/>
        <label>2</label>
        <note>4Fe-4S-S-AdoMet</note>
    </ligand>
</feature>
<feature type="binding site" evidence="1">
    <location>
        <position position="184"/>
    </location>
    <ligand>
        <name>[4Fe-4S] cluster</name>
        <dbReference type="ChEBI" id="CHEBI:49883"/>
        <label>2</label>
        <note>4Fe-4S-S-AdoMet</note>
    </ligand>
</feature>
<comment type="function">
    <text evidence="1">Catalyzes the methylthiolation of N6-(dimethylallyl)adenosine (i(6)A), leading to the formation of 2-methylthio-N6-(dimethylallyl)adenosine (ms(2)i(6)A) at position 37 in tRNAs that read codons beginning with uridine.</text>
</comment>
<comment type="catalytic activity">
    <reaction evidence="1">
        <text>N(6)-dimethylallyladenosine(37) in tRNA + (sulfur carrier)-SH + AH2 + 2 S-adenosyl-L-methionine = 2-methylsulfanyl-N(6)-dimethylallyladenosine(37) in tRNA + (sulfur carrier)-H + 5'-deoxyadenosine + L-methionine + A + S-adenosyl-L-homocysteine + 2 H(+)</text>
        <dbReference type="Rhea" id="RHEA:37067"/>
        <dbReference type="Rhea" id="RHEA-COMP:10375"/>
        <dbReference type="Rhea" id="RHEA-COMP:10376"/>
        <dbReference type="Rhea" id="RHEA-COMP:14737"/>
        <dbReference type="Rhea" id="RHEA-COMP:14739"/>
        <dbReference type="ChEBI" id="CHEBI:13193"/>
        <dbReference type="ChEBI" id="CHEBI:15378"/>
        <dbReference type="ChEBI" id="CHEBI:17319"/>
        <dbReference type="ChEBI" id="CHEBI:17499"/>
        <dbReference type="ChEBI" id="CHEBI:29917"/>
        <dbReference type="ChEBI" id="CHEBI:57844"/>
        <dbReference type="ChEBI" id="CHEBI:57856"/>
        <dbReference type="ChEBI" id="CHEBI:59789"/>
        <dbReference type="ChEBI" id="CHEBI:64428"/>
        <dbReference type="ChEBI" id="CHEBI:74415"/>
        <dbReference type="ChEBI" id="CHEBI:74417"/>
        <dbReference type="EC" id="2.8.4.3"/>
    </reaction>
</comment>
<comment type="cofactor">
    <cofactor evidence="1">
        <name>[4Fe-4S] cluster</name>
        <dbReference type="ChEBI" id="CHEBI:49883"/>
    </cofactor>
    <text evidence="1">Binds 2 [4Fe-4S] clusters. One cluster is coordinated with 3 cysteines and an exchangeable S-adenosyl-L-methionine.</text>
</comment>
<comment type="subunit">
    <text evidence="1">Monomer.</text>
</comment>
<comment type="subcellular location">
    <subcellularLocation>
        <location evidence="1">Cytoplasm</location>
    </subcellularLocation>
</comment>
<comment type="similarity">
    <text evidence="1">Belongs to the methylthiotransferase family. MiaB subfamily.</text>
</comment>
<reference key="1">
    <citation type="journal article" date="2008" name="Genome Res.">
        <title>Insights from the complete genome sequence of Mycobacterium marinum on the evolution of Mycobacterium tuberculosis.</title>
        <authorList>
            <person name="Stinear T.P."/>
            <person name="Seemann T."/>
            <person name="Harrison P.F."/>
            <person name="Jenkin G.A."/>
            <person name="Davies J.K."/>
            <person name="Johnson P.D."/>
            <person name="Abdellah Z."/>
            <person name="Arrowsmith C."/>
            <person name="Chillingworth T."/>
            <person name="Churcher C."/>
            <person name="Clarke K."/>
            <person name="Cronin A."/>
            <person name="Davis P."/>
            <person name="Goodhead I."/>
            <person name="Holroyd N."/>
            <person name="Jagels K."/>
            <person name="Lord A."/>
            <person name="Moule S."/>
            <person name="Mungall K."/>
            <person name="Norbertczak H."/>
            <person name="Quail M.A."/>
            <person name="Rabbinowitsch E."/>
            <person name="Walker D."/>
            <person name="White B."/>
            <person name="Whitehead S."/>
            <person name="Small P.L."/>
            <person name="Brosch R."/>
            <person name="Ramakrishnan L."/>
            <person name="Fischbach M.A."/>
            <person name="Parkhill J."/>
            <person name="Cole S.T."/>
        </authorList>
    </citation>
    <scope>NUCLEOTIDE SEQUENCE [LARGE SCALE GENOMIC DNA]</scope>
    <source>
        <strain>ATCC BAA-535 / M</strain>
    </source>
</reference>
<name>MIAB2_MYCMM</name>
<protein>
    <recommendedName>
        <fullName evidence="1">tRNA-2-methylthio-N(6)-dimethylallyladenosine synthase 2</fullName>
        <ecNumber evidence="1">2.8.4.3</ecNumber>
    </recommendedName>
    <alternativeName>
        <fullName evidence="1">(Dimethylallyl)adenosine tRNA methylthiotransferase MiaB 2</fullName>
    </alternativeName>
    <alternativeName>
        <fullName evidence="1">tRNA-i(6)A37 methylthiotransferase 2</fullName>
    </alternativeName>
</protein>
<accession>B2HL08</accession>
<organism>
    <name type="scientific">Mycobacterium marinum (strain ATCC BAA-535 / M)</name>
    <dbReference type="NCBI Taxonomy" id="216594"/>
    <lineage>
        <taxon>Bacteria</taxon>
        <taxon>Bacillati</taxon>
        <taxon>Actinomycetota</taxon>
        <taxon>Actinomycetes</taxon>
        <taxon>Mycobacteriales</taxon>
        <taxon>Mycobacteriaceae</taxon>
        <taxon>Mycobacterium</taxon>
        <taxon>Mycobacterium ulcerans group</taxon>
    </lineage>
</organism>
<dbReference type="EC" id="2.8.4.3" evidence="1"/>
<dbReference type="EMBL" id="CP000854">
    <property type="protein sequence ID" value="ACC40429.1"/>
    <property type="molecule type" value="Genomic_DNA"/>
</dbReference>
<dbReference type="SMR" id="B2HL08"/>
<dbReference type="STRING" id="216594.MMAR_1979"/>
<dbReference type="KEGG" id="mmi:MMAR_1979"/>
<dbReference type="eggNOG" id="COG0621">
    <property type="taxonomic scope" value="Bacteria"/>
</dbReference>
<dbReference type="HOGENOM" id="CLU_018697_2_2_11"/>
<dbReference type="OrthoDB" id="9805215at2"/>
<dbReference type="Proteomes" id="UP000001190">
    <property type="component" value="Chromosome"/>
</dbReference>
<dbReference type="GO" id="GO:0005829">
    <property type="term" value="C:cytosol"/>
    <property type="evidence" value="ECO:0007669"/>
    <property type="project" value="TreeGrafter"/>
</dbReference>
<dbReference type="GO" id="GO:0051539">
    <property type="term" value="F:4 iron, 4 sulfur cluster binding"/>
    <property type="evidence" value="ECO:0007669"/>
    <property type="project" value="UniProtKB-UniRule"/>
</dbReference>
<dbReference type="GO" id="GO:0046872">
    <property type="term" value="F:metal ion binding"/>
    <property type="evidence" value="ECO:0007669"/>
    <property type="project" value="UniProtKB-KW"/>
</dbReference>
<dbReference type="GO" id="GO:0035597">
    <property type="term" value="F:N6-isopentenyladenosine methylthiotransferase activity"/>
    <property type="evidence" value="ECO:0007669"/>
    <property type="project" value="TreeGrafter"/>
</dbReference>
<dbReference type="CDD" id="cd01335">
    <property type="entry name" value="Radical_SAM"/>
    <property type="match status" value="1"/>
</dbReference>
<dbReference type="FunFam" id="3.40.50.12160:FF:000003">
    <property type="entry name" value="CDK5 regulatory subunit-associated protein 1"/>
    <property type="match status" value="1"/>
</dbReference>
<dbReference type="FunFam" id="3.80.30.20:FF:000001">
    <property type="entry name" value="tRNA-2-methylthio-N(6)-dimethylallyladenosine synthase 2"/>
    <property type="match status" value="1"/>
</dbReference>
<dbReference type="Gene3D" id="3.40.50.12160">
    <property type="entry name" value="Methylthiotransferase, N-terminal domain"/>
    <property type="match status" value="1"/>
</dbReference>
<dbReference type="Gene3D" id="3.80.30.20">
    <property type="entry name" value="tm_1862 like domain"/>
    <property type="match status" value="1"/>
</dbReference>
<dbReference type="HAMAP" id="MF_01864">
    <property type="entry name" value="tRNA_metthiotr_MiaB"/>
    <property type="match status" value="1"/>
</dbReference>
<dbReference type="InterPro" id="IPR006638">
    <property type="entry name" value="Elp3/MiaA/NifB-like_rSAM"/>
</dbReference>
<dbReference type="InterPro" id="IPR005839">
    <property type="entry name" value="Methylthiotransferase"/>
</dbReference>
<dbReference type="InterPro" id="IPR020612">
    <property type="entry name" value="Methylthiotransferase_CS"/>
</dbReference>
<dbReference type="InterPro" id="IPR013848">
    <property type="entry name" value="Methylthiotransferase_N"/>
</dbReference>
<dbReference type="InterPro" id="IPR038135">
    <property type="entry name" value="Methylthiotransferase_N_sf"/>
</dbReference>
<dbReference type="InterPro" id="IPR006463">
    <property type="entry name" value="MiaB_methiolase"/>
</dbReference>
<dbReference type="InterPro" id="IPR007197">
    <property type="entry name" value="rSAM"/>
</dbReference>
<dbReference type="InterPro" id="IPR023404">
    <property type="entry name" value="rSAM_horseshoe"/>
</dbReference>
<dbReference type="InterPro" id="IPR002792">
    <property type="entry name" value="TRAM_dom"/>
</dbReference>
<dbReference type="NCBIfam" id="TIGR01574">
    <property type="entry name" value="miaB-methiolase"/>
    <property type="match status" value="1"/>
</dbReference>
<dbReference type="NCBIfam" id="TIGR00089">
    <property type="entry name" value="MiaB/RimO family radical SAM methylthiotransferase"/>
    <property type="match status" value="1"/>
</dbReference>
<dbReference type="PANTHER" id="PTHR43020">
    <property type="entry name" value="CDK5 REGULATORY SUBUNIT-ASSOCIATED PROTEIN 1"/>
    <property type="match status" value="1"/>
</dbReference>
<dbReference type="PANTHER" id="PTHR43020:SF2">
    <property type="entry name" value="MITOCHONDRIAL TRNA METHYLTHIOTRANSFERASE CDK5RAP1"/>
    <property type="match status" value="1"/>
</dbReference>
<dbReference type="Pfam" id="PF04055">
    <property type="entry name" value="Radical_SAM"/>
    <property type="match status" value="1"/>
</dbReference>
<dbReference type="Pfam" id="PF00919">
    <property type="entry name" value="UPF0004"/>
    <property type="match status" value="1"/>
</dbReference>
<dbReference type="SFLD" id="SFLDF00273">
    <property type="entry name" value="(dimethylallyl)adenosine_tRNA"/>
    <property type="match status" value="1"/>
</dbReference>
<dbReference type="SFLD" id="SFLDG01082">
    <property type="entry name" value="B12-binding_domain_containing"/>
    <property type="match status" value="1"/>
</dbReference>
<dbReference type="SFLD" id="SFLDS00029">
    <property type="entry name" value="Radical_SAM"/>
    <property type="match status" value="1"/>
</dbReference>
<dbReference type="SMART" id="SM00729">
    <property type="entry name" value="Elp3"/>
    <property type="match status" value="1"/>
</dbReference>
<dbReference type="SUPFAM" id="SSF102114">
    <property type="entry name" value="Radical SAM enzymes"/>
    <property type="match status" value="1"/>
</dbReference>
<dbReference type="PROSITE" id="PS51449">
    <property type="entry name" value="MTTASE_N"/>
    <property type="match status" value="1"/>
</dbReference>
<dbReference type="PROSITE" id="PS01278">
    <property type="entry name" value="MTTASE_RADICAL"/>
    <property type="match status" value="1"/>
</dbReference>
<dbReference type="PROSITE" id="PS51918">
    <property type="entry name" value="RADICAL_SAM"/>
    <property type="match status" value="1"/>
</dbReference>
<dbReference type="PROSITE" id="PS50926">
    <property type="entry name" value="TRAM"/>
    <property type="match status" value="1"/>
</dbReference>
<evidence type="ECO:0000255" key="1">
    <source>
        <dbReference type="HAMAP-Rule" id="MF_01864"/>
    </source>
</evidence>
<evidence type="ECO:0000255" key="2">
    <source>
        <dbReference type="PROSITE-ProRule" id="PRU01266"/>
    </source>
</evidence>
<evidence type="ECO:0000256" key="3">
    <source>
        <dbReference type="SAM" id="MobiDB-lite"/>
    </source>
</evidence>
<sequence length="532" mass="56631">MTSTVAHGAGSAGPADDAEPMSARTYQVRTYGCQMNVHDSERMAGLLEAAGYRRAAEGTDADVVVFNTCAVRENADNKLYGNLSHLAPRKRTSPDMQIAVGGCLAQKDRDALLRKAPWVDVVFGTHNIGSLPALLDRARHNRVAQVEIAEALQQFPSSLPSARESAYAAWVSISVGCNNTCTFCIVPSLRGKEIDRSPADILAEVQSLVDTGVVEITLLGQNVNAYGVSFADPALPRNRGAFAELLRACGDIDGLERVRFTSPHPAEFTDDVIEAMAQTPNVCPALHMPLQSGSDRVLRAMRRSYRAERYLGIIERVRAAMPHAAITTDLIVGFPGETEQDFAATLDVVRQARFSAAFTFQYSKRPGTPAAELDGQLPKAVVQERYERLVELQEQISLEGNRAIVGQRVELLVATGEGRKDTLTARMSGRARDGRLVHFRAGDGPVRPGDIVTVEVTDAAPHHLIADGGILAHRRTRAGDAHADGQTVRGIGLGMPGIGRPVVPVAAEATSCGSAGGCGSADGAGSSAGDPQ</sequence>